<feature type="chain" id="PRO_1000065074" description="Ornithine carbamoyltransferase">
    <location>
        <begin position="1"/>
        <end position="313"/>
    </location>
</feature>
<feature type="binding site" evidence="2">
    <location>
        <begin position="61"/>
        <end position="64"/>
    </location>
    <ligand>
        <name>carbamoyl phosphate</name>
        <dbReference type="ChEBI" id="CHEBI:58228"/>
    </ligand>
</feature>
<feature type="binding site" evidence="2">
    <location>
        <position position="88"/>
    </location>
    <ligand>
        <name>carbamoyl phosphate</name>
        <dbReference type="ChEBI" id="CHEBI:58228"/>
    </ligand>
</feature>
<feature type="binding site" evidence="2">
    <location>
        <position position="112"/>
    </location>
    <ligand>
        <name>carbamoyl phosphate</name>
        <dbReference type="ChEBI" id="CHEBI:58228"/>
    </ligand>
</feature>
<feature type="binding site" evidence="2">
    <location>
        <begin position="139"/>
        <end position="142"/>
    </location>
    <ligand>
        <name>carbamoyl phosphate</name>
        <dbReference type="ChEBI" id="CHEBI:58228"/>
    </ligand>
</feature>
<feature type="binding site" evidence="2">
    <location>
        <position position="170"/>
    </location>
    <ligand>
        <name>L-ornithine</name>
        <dbReference type="ChEBI" id="CHEBI:46911"/>
    </ligand>
</feature>
<feature type="binding site" evidence="2">
    <location>
        <position position="228"/>
    </location>
    <ligand>
        <name>L-ornithine</name>
        <dbReference type="ChEBI" id="CHEBI:46911"/>
    </ligand>
</feature>
<feature type="binding site" evidence="2">
    <location>
        <begin position="232"/>
        <end position="233"/>
    </location>
    <ligand>
        <name>L-ornithine</name>
        <dbReference type="ChEBI" id="CHEBI:46911"/>
    </ligand>
</feature>
<feature type="binding site" evidence="2">
    <location>
        <begin position="268"/>
        <end position="269"/>
    </location>
    <ligand>
        <name>carbamoyl phosphate</name>
        <dbReference type="ChEBI" id="CHEBI:58228"/>
    </ligand>
</feature>
<feature type="binding site" evidence="2">
    <location>
        <position position="296"/>
    </location>
    <ligand>
        <name>carbamoyl phosphate</name>
        <dbReference type="ChEBI" id="CHEBI:58228"/>
    </ligand>
</feature>
<sequence length="313" mass="35298">MTLPTTQNGPLRHFLQFKDLTASEIGYVLDRARIIKDKFKRYEPHMPLHDRTLAMVFEKASTRTRVSFEAGMYQMGGSVINLTSNDSQLGRSEPIEDTARVVSRMVDIVMIRTFEQTRIERFAAHSRVPVINGLTNEYHPCQILADIFTYIEHRGSIAGRIVAWVGDANNMSYTWLQAAEMLGFTLHVSTPAGYQLDPARIGNPPPSVLKQFKDPMQACQGAHLVTTDVWTSMGYEAENEERRKAFADWCVDAEMMAAADPNAVFMHCLPAHRGEEVTGEVIDGPQSVVWDEAENRMHAQKALMEFLLLGEIH</sequence>
<keyword id="KW-0028">Amino-acid biosynthesis</keyword>
<keyword id="KW-0055">Arginine biosynthesis</keyword>
<keyword id="KW-0963">Cytoplasm</keyword>
<keyword id="KW-1185">Reference proteome</keyword>
<keyword id="KW-0808">Transferase</keyword>
<dbReference type="EC" id="2.1.3.3" evidence="2"/>
<dbReference type="EMBL" id="AM167904">
    <property type="protein sequence ID" value="CAJ49722.1"/>
    <property type="molecule type" value="Genomic_DNA"/>
</dbReference>
<dbReference type="RefSeq" id="WP_012417778.1">
    <property type="nucleotide sequence ID" value="NC_010645.1"/>
</dbReference>
<dbReference type="SMR" id="Q2KZD0"/>
<dbReference type="STRING" id="360910.BAV2112"/>
<dbReference type="GeneID" id="92934830"/>
<dbReference type="KEGG" id="bav:BAV2112"/>
<dbReference type="eggNOG" id="COG0078">
    <property type="taxonomic scope" value="Bacteria"/>
</dbReference>
<dbReference type="HOGENOM" id="CLU_043846_3_2_4"/>
<dbReference type="OrthoDB" id="9802587at2"/>
<dbReference type="UniPathway" id="UPA00068">
    <property type="reaction ID" value="UER00112"/>
</dbReference>
<dbReference type="Proteomes" id="UP000001977">
    <property type="component" value="Chromosome"/>
</dbReference>
<dbReference type="GO" id="GO:0005737">
    <property type="term" value="C:cytoplasm"/>
    <property type="evidence" value="ECO:0007669"/>
    <property type="project" value="UniProtKB-SubCell"/>
</dbReference>
<dbReference type="GO" id="GO:0016597">
    <property type="term" value="F:amino acid binding"/>
    <property type="evidence" value="ECO:0007669"/>
    <property type="project" value="InterPro"/>
</dbReference>
<dbReference type="GO" id="GO:0004585">
    <property type="term" value="F:ornithine carbamoyltransferase activity"/>
    <property type="evidence" value="ECO:0007669"/>
    <property type="project" value="UniProtKB-UniRule"/>
</dbReference>
<dbReference type="GO" id="GO:0042450">
    <property type="term" value="P:arginine biosynthetic process via ornithine"/>
    <property type="evidence" value="ECO:0007669"/>
    <property type="project" value="TreeGrafter"/>
</dbReference>
<dbReference type="GO" id="GO:0019240">
    <property type="term" value="P:citrulline biosynthetic process"/>
    <property type="evidence" value="ECO:0007669"/>
    <property type="project" value="TreeGrafter"/>
</dbReference>
<dbReference type="GO" id="GO:0006526">
    <property type="term" value="P:L-arginine biosynthetic process"/>
    <property type="evidence" value="ECO:0007669"/>
    <property type="project" value="UniProtKB-UniRule"/>
</dbReference>
<dbReference type="FunFam" id="3.40.50.1370:FF:000008">
    <property type="entry name" value="Ornithine carbamoyltransferase"/>
    <property type="match status" value="1"/>
</dbReference>
<dbReference type="Gene3D" id="3.40.50.1370">
    <property type="entry name" value="Aspartate/ornithine carbamoyltransferase"/>
    <property type="match status" value="2"/>
</dbReference>
<dbReference type="HAMAP" id="MF_01109">
    <property type="entry name" value="OTCase"/>
    <property type="match status" value="1"/>
</dbReference>
<dbReference type="InterPro" id="IPR006132">
    <property type="entry name" value="Asp/Orn_carbamoyltranf_P-bd"/>
</dbReference>
<dbReference type="InterPro" id="IPR006130">
    <property type="entry name" value="Asp/Orn_carbamoylTrfase"/>
</dbReference>
<dbReference type="InterPro" id="IPR036901">
    <property type="entry name" value="Asp/Orn_carbamoylTrfase_sf"/>
</dbReference>
<dbReference type="InterPro" id="IPR006131">
    <property type="entry name" value="Asp_carbamoyltransf_Asp/Orn-bd"/>
</dbReference>
<dbReference type="InterPro" id="IPR002292">
    <property type="entry name" value="Orn/put_carbamltrans"/>
</dbReference>
<dbReference type="InterPro" id="IPR024904">
    <property type="entry name" value="OTCase_ArgI"/>
</dbReference>
<dbReference type="NCBIfam" id="TIGR00658">
    <property type="entry name" value="orni_carb_tr"/>
    <property type="match status" value="1"/>
</dbReference>
<dbReference type="NCBIfam" id="NF001986">
    <property type="entry name" value="PRK00779.1"/>
    <property type="match status" value="1"/>
</dbReference>
<dbReference type="PANTHER" id="PTHR45753">
    <property type="entry name" value="ORNITHINE CARBAMOYLTRANSFERASE, MITOCHONDRIAL"/>
    <property type="match status" value="1"/>
</dbReference>
<dbReference type="PANTHER" id="PTHR45753:SF3">
    <property type="entry name" value="ORNITHINE TRANSCARBAMYLASE, MITOCHONDRIAL"/>
    <property type="match status" value="1"/>
</dbReference>
<dbReference type="Pfam" id="PF00185">
    <property type="entry name" value="OTCace"/>
    <property type="match status" value="1"/>
</dbReference>
<dbReference type="Pfam" id="PF02729">
    <property type="entry name" value="OTCace_N"/>
    <property type="match status" value="1"/>
</dbReference>
<dbReference type="PRINTS" id="PR00100">
    <property type="entry name" value="AOTCASE"/>
</dbReference>
<dbReference type="PRINTS" id="PR00102">
    <property type="entry name" value="OTCASE"/>
</dbReference>
<dbReference type="SUPFAM" id="SSF53671">
    <property type="entry name" value="Aspartate/ornithine carbamoyltransferase"/>
    <property type="match status" value="1"/>
</dbReference>
<dbReference type="PROSITE" id="PS00097">
    <property type="entry name" value="CARBAMOYLTRANSFERASE"/>
    <property type="match status" value="1"/>
</dbReference>
<protein>
    <recommendedName>
        <fullName evidence="2">Ornithine carbamoyltransferase</fullName>
        <shortName evidence="2">OTCase</shortName>
        <ecNumber evidence="2">2.1.3.3</ecNumber>
    </recommendedName>
</protein>
<name>OTC_BORA1</name>
<evidence type="ECO:0000250" key="1"/>
<evidence type="ECO:0000255" key="2">
    <source>
        <dbReference type="HAMAP-Rule" id="MF_01109"/>
    </source>
</evidence>
<accession>Q2KZD0</accession>
<organism>
    <name type="scientific">Bordetella avium (strain 197N)</name>
    <dbReference type="NCBI Taxonomy" id="360910"/>
    <lineage>
        <taxon>Bacteria</taxon>
        <taxon>Pseudomonadati</taxon>
        <taxon>Pseudomonadota</taxon>
        <taxon>Betaproteobacteria</taxon>
        <taxon>Burkholderiales</taxon>
        <taxon>Alcaligenaceae</taxon>
        <taxon>Bordetella</taxon>
    </lineage>
</organism>
<gene>
    <name evidence="2" type="primary">argF</name>
    <name type="ordered locus">BAV2112</name>
</gene>
<reference key="1">
    <citation type="journal article" date="2006" name="J. Bacteriol.">
        <title>Comparison of the genome sequence of the poultry pathogen Bordetella avium with those of B. bronchiseptica, B. pertussis, and B. parapertussis reveals extensive diversity in surface structures associated with host interaction.</title>
        <authorList>
            <person name="Sebaihia M."/>
            <person name="Preston A."/>
            <person name="Maskell D.J."/>
            <person name="Kuzmiak H."/>
            <person name="Connell T.D."/>
            <person name="King N.D."/>
            <person name="Orndorff P.E."/>
            <person name="Miyamoto D.M."/>
            <person name="Thomson N.R."/>
            <person name="Harris D."/>
            <person name="Goble A."/>
            <person name="Lord A."/>
            <person name="Murphy L."/>
            <person name="Quail M.A."/>
            <person name="Rutter S."/>
            <person name="Squares R."/>
            <person name="Squares S."/>
            <person name="Woodward J."/>
            <person name="Parkhill J."/>
            <person name="Temple L.M."/>
        </authorList>
    </citation>
    <scope>NUCLEOTIDE SEQUENCE [LARGE SCALE GENOMIC DNA]</scope>
    <source>
        <strain>197N</strain>
    </source>
</reference>
<comment type="function">
    <text evidence="1">Reversibly catalyzes the transfer of the carbamoyl group from carbamoyl phosphate (CP) to the N(epsilon) atom of ornithine (ORN) to produce L-citrulline.</text>
</comment>
<comment type="catalytic activity">
    <reaction evidence="2">
        <text>carbamoyl phosphate + L-ornithine = L-citrulline + phosphate + H(+)</text>
        <dbReference type="Rhea" id="RHEA:19513"/>
        <dbReference type="ChEBI" id="CHEBI:15378"/>
        <dbReference type="ChEBI" id="CHEBI:43474"/>
        <dbReference type="ChEBI" id="CHEBI:46911"/>
        <dbReference type="ChEBI" id="CHEBI:57743"/>
        <dbReference type="ChEBI" id="CHEBI:58228"/>
        <dbReference type="EC" id="2.1.3.3"/>
    </reaction>
</comment>
<comment type="pathway">
    <text evidence="2">Amino-acid biosynthesis; L-arginine biosynthesis; L-arginine from L-ornithine and carbamoyl phosphate: step 1/3.</text>
</comment>
<comment type="subcellular location">
    <subcellularLocation>
        <location evidence="2">Cytoplasm</location>
    </subcellularLocation>
</comment>
<comment type="similarity">
    <text evidence="2">Belongs to the aspartate/ornithine carbamoyltransferase superfamily. OTCase family.</text>
</comment>
<proteinExistence type="inferred from homology"/>